<proteinExistence type="inferred from homology"/>
<dbReference type="EC" id="3.5.99.6" evidence="1"/>
<dbReference type="EMBL" id="CP000038">
    <property type="protein sequence ID" value="AAZ87390.1"/>
    <property type="molecule type" value="Genomic_DNA"/>
</dbReference>
<dbReference type="RefSeq" id="WP_001237072.1">
    <property type="nucleotide sequence ID" value="NC_007384.1"/>
</dbReference>
<dbReference type="SMR" id="Q3Z4C2"/>
<dbReference type="GeneID" id="93776807"/>
<dbReference type="KEGG" id="ssn:SSON_0632"/>
<dbReference type="HOGENOM" id="CLU_049611_0_1_6"/>
<dbReference type="UniPathway" id="UPA00629">
    <property type="reaction ID" value="UER00684"/>
</dbReference>
<dbReference type="Proteomes" id="UP000002529">
    <property type="component" value="Chromosome"/>
</dbReference>
<dbReference type="GO" id="GO:0005829">
    <property type="term" value="C:cytosol"/>
    <property type="evidence" value="ECO:0007669"/>
    <property type="project" value="TreeGrafter"/>
</dbReference>
<dbReference type="GO" id="GO:0004342">
    <property type="term" value="F:glucosamine-6-phosphate deaminase activity"/>
    <property type="evidence" value="ECO:0007669"/>
    <property type="project" value="UniProtKB-UniRule"/>
</dbReference>
<dbReference type="GO" id="GO:0042802">
    <property type="term" value="F:identical protein binding"/>
    <property type="evidence" value="ECO:0007669"/>
    <property type="project" value="TreeGrafter"/>
</dbReference>
<dbReference type="GO" id="GO:0005975">
    <property type="term" value="P:carbohydrate metabolic process"/>
    <property type="evidence" value="ECO:0007669"/>
    <property type="project" value="InterPro"/>
</dbReference>
<dbReference type="GO" id="GO:0006043">
    <property type="term" value="P:glucosamine catabolic process"/>
    <property type="evidence" value="ECO:0007669"/>
    <property type="project" value="TreeGrafter"/>
</dbReference>
<dbReference type="GO" id="GO:0006046">
    <property type="term" value="P:N-acetylglucosamine catabolic process"/>
    <property type="evidence" value="ECO:0007669"/>
    <property type="project" value="TreeGrafter"/>
</dbReference>
<dbReference type="GO" id="GO:0019262">
    <property type="term" value="P:N-acetylneuraminate catabolic process"/>
    <property type="evidence" value="ECO:0007669"/>
    <property type="project" value="UniProtKB-UniRule"/>
</dbReference>
<dbReference type="CDD" id="cd01399">
    <property type="entry name" value="GlcN6P_deaminase"/>
    <property type="match status" value="1"/>
</dbReference>
<dbReference type="FunFam" id="3.40.50.1360:FF:000002">
    <property type="entry name" value="Glucosamine-6-phosphate deaminase"/>
    <property type="match status" value="1"/>
</dbReference>
<dbReference type="Gene3D" id="3.40.50.1360">
    <property type="match status" value="1"/>
</dbReference>
<dbReference type="HAMAP" id="MF_01241">
    <property type="entry name" value="GlcN6P_deamin"/>
    <property type="match status" value="1"/>
</dbReference>
<dbReference type="InterPro" id="IPR006148">
    <property type="entry name" value="Glc/Gal-6P_isomerase"/>
</dbReference>
<dbReference type="InterPro" id="IPR004547">
    <property type="entry name" value="Glucosamine6P_isomerase"/>
</dbReference>
<dbReference type="InterPro" id="IPR018321">
    <property type="entry name" value="Glucosamine6P_isomerase_CS"/>
</dbReference>
<dbReference type="InterPro" id="IPR037171">
    <property type="entry name" value="NagB/RpiA_transferase-like"/>
</dbReference>
<dbReference type="NCBIfam" id="TIGR00502">
    <property type="entry name" value="nagB"/>
    <property type="match status" value="1"/>
</dbReference>
<dbReference type="NCBIfam" id="NF001685">
    <property type="entry name" value="PRK00443.1-5"/>
    <property type="match status" value="1"/>
</dbReference>
<dbReference type="PANTHER" id="PTHR11280">
    <property type="entry name" value="GLUCOSAMINE-6-PHOSPHATE ISOMERASE"/>
    <property type="match status" value="1"/>
</dbReference>
<dbReference type="PANTHER" id="PTHR11280:SF5">
    <property type="entry name" value="GLUCOSAMINE-6-PHOSPHATE ISOMERASE"/>
    <property type="match status" value="1"/>
</dbReference>
<dbReference type="Pfam" id="PF01182">
    <property type="entry name" value="Glucosamine_iso"/>
    <property type="match status" value="1"/>
</dbReference>
<dbReference type="SUPFAM" id="SSF100950">
    <property type="entry name" value="NagB/RpiA/CoA transferase-like"/>
    <property type="match status" value="1"/>
</dbReference>
<dbReference type="PROSITE" id="PS01161">
    <property type="entry name" value="GLC_GALNAC_ISOMERASE"/>
    <property type="match status" value="1"/>
</dbReference>
<gene>
    <name evidence="1" type="primary">nagB</name>
    <name type="ordered locus">SSON_0632</name>
</gene>
<feature type="chain" id="PRO_1000067021" description="Glucosamine-6-phosphate deaminase">
    <location>
        <begin position="1"/>
        <end position="266"/>
    </location>
</feature>
<feature type="active site" description="Proton acceptor; for enolization step" evidence="1">
    <location>
        <position position="72"/>
    </location>
</feature>
<feature type="active site" description="For ring-opening step" evidence="1">
    <location>
        <position position="141"/>
    </location>
</feature>
<feature type="active site" description="Proton acceptor; for ring-opening step" evidence="1">
    <location>
        <position position="143"/>
    </location>
</feature>
<feature type="active site" description="For ring-opening step" evidence="1">
    <location>
        <position position="148"/>
    </location>
</feature>
<feature type="site" description="Part of the allosteric site" evidence="1">
    <location>
        <position position="151"/>
    </location>
</feature>
<feature type="site" description="Part of the allosteric site" evidence="1">
    <location>
        <position position="158"/>
    </location>
</feature>
<feature type="site" description="Part of the allosteric site" evidence="1">
    <location>
        <position position="160"/>
    </location>
</feature>
<feature type="site" description="Part of the allosteric site" evidence="1">
    <location>
        <position position="161"/>
    </location>
</feature>
<feature type="site" description="Part of the allosteric site" evidence="1">
    <location>
        <position position="254"/>
    </location>
</feature>
<feature type="disulfide bond" description="Interchain" evidence="1">
    <location>
        <position position="219"/>
    </location>
</feature>
<name>NAGB_SHISS</name>
<sequence>MRLIPLTTAEQVGKWAARHIVNRINAFKPTADRPFVLGLPTGGTPMTTYKALVEMHKAGQVSFKHVVTFNMDEYVGLPKEHPESYYSFMHRNFFDHVDIPAENINLLNGNAPDIDAECRQYEEKIRSYGKIHLFMGGVGNDGHIAFNEPASSLASRTRIKTLTHDTRVANSRFFDNDVNQVPKYALTVGVGTLLDAEEVMILVLGSQKALALQAAVEGCVNHMWTISCLQLHPKAIMVCDEPSTMELKVKTLRYFNELEAENIKGL</sequence>
<accession>Q3Z4C2</accession>
<organism>
    <name type="scientific">Shigella sonnei (strain Ss046)</name>
    <dbReference type="NCBI Taxonomy" id="300269"/>
    <lineage>
        <taxon>Bacteria</taxon>
        <taxon>Pseudomonadati</taxon>
        <taxon>Pseudomonadota</taxon>
        <taxon>Gammaproteobacteria</taxon>
        <taxon>Enterobacterales</taxon>
        <taxon>Enterobacteriaceae</taxon>
        <taxon>Shigella</taxon>
    </lineage>
</organism>
<comment type="function">
    <text evidence="1">Catalyzes the reversible isomerization-deamination of glucosamine 6-phosphate (GlcN6P) to form fructose 6-phosphate (Fru6P) and ammonium ion.</text>
</comment>
<comment type="catalytic activity">
    <reaction evidence="1">
        <text>alpha-D-glucosamine 6-phosphate + H2O = beta-D-fructose 6-phosphate + NH4(+)</text>
        <dbReference type="Rhea" id="RHEA:12172"/>
        <dbReference type="ChEBI" id="CHEBI:15377"/>
        <dbReference type="ChEBI" id="CHEBI:28938"/>
        <dbReference type="ChEBI" id="CHEBI:57634"/>
        <dbReference type="ChEBI" id="CHEBI:75989"/>
        <dbReference type="EC" id="3.5.99.6"/>
    </reaction>
</comment>
<comment type="activity regulation">
    <text evidence="1">Allosterically activated by N-acetylglucosamine 6-phosphate (GlcNAc6P).</text>
</comment>
<comment type="pathway">
    <text evidence="1">Amino-sugar metabolism; N-acetylneuraminate degradation; D-fructose 6-phosphate from N-acetylneuraminate: step 5/5.</text>
</comment>
<comment type="subunit">
    <text evidence="1">Homohexamer; trimer of disulfide-linked dimers.</text>
</comment>
<comment type="similarity">
    <text evidence="1">Belongs to the glucosamine/galactosamine-6-phosphate isomerase family. NagB subfamily.</text>
</comment>
<evidence type="ECO:0000255" key="1">
    <source>
        <dbReference type="HAMAP-Rule" id="MF_01241"/>
    </source>
</evidence>
<reference key="1">
    <citation type="journal article" date="2005" name="Nucleic Acids Res.">
        <title>Genome dynamics and diversity of Shigella species, the etiologic agents of bacillary dysentery.</title>
        <authorList>
            <person name="Yang F."/>
            <person name="Yang J."/>
            <person name="Zhang X."/>
            <person name="Chen L."/>
            <person name="Jiang Y."/>
            <person name="Yan Y."/>
            <person name="Tang X."/>
            <person name="Wang J."/>
            <person name="Xiong Z."/>
            <person name="Dong J."/>
            <person name="Xue Y."/>
            <person name="Zhu Y."/>
            <person name="Xu X."/>
            <person name="Sun L."/>
            <person name="Chen S."/>
            <person name="Nie H."/>
            <person name="Peng J."/>
            <person name="Xu J."/>
            <person name="Wang Y."/>
            <person name="Yuan Z."/>
            <person name="Wen Y."/>
            <person name="Yao Z."/>
            <person name="Shen Y."/>
            <person name="Qiang B."/>
            <person name="Hou Y."/>
            <person name="Yu J."/>
            <person name="Jin Q."/>
        </authorList>
    </citation>
    <scope>NUCLEOTIDE SEQUENCE [LARGE SCALE GENOMIC DNA]</scope>
    <source>
        <strain>Ss046</strain>
    </source>
</reference>
<protein>
    <recommendedName>
        <fullName evidence="1">Glucosamine-6-phosphate deaminase</fullName>
        <ecNumber evidence="1">3.5.99.6</ecNumber>
    </recommendedName>
    <alternativeName>
        <fullName evidence="1">GlcN6P deaminase</fullName>
        <shortName evidence="1">GNPDA</shortName>
    </alternativeName>
    <alternativeName>
        <fullName evidence="1">Glucosamine-6-phosphate isomerase</fullName>
    </alternativeName>
</protein>
<keyword id="KW-0021">Allosteric enzyme</keyword>
<keyword id="KW-0119">Carbohydrate metabolism</keyword>
<keyword id="KW-1015">Disulfide bond</keyword>
<keyword id="KW-0378">Hydrolase</keyword>
<keyword id="KW-1185">Reference proteome</keyword>